<name>MURD_BRUA2</name>
<feature type="chain" id="PRO_0000257169" description="UDP-N-acetylmuramoylalanine--D-glutamate ligase">
    <location>
        <begin position="1"/>
        <end position="467"/>
    </location>
</feature>
<feature type="binding site" evidence="1">
    <location>
        <begin position="121"/>
        <end position="127"/>
    </location>
    <ligand>
        <name>ATP</name>
        <dbReference type="ChEBI" id="CHEBI:30616"/>
    </ligand>
</feature>
<accession>Q2YM69</accession>
<comment type="function">
    <text evidence="1">Cell wall formation. Catalyzes the addition of glutamate to the nucleotide precursor UDP-N-acetylmuramoyl-L-alanine (UMA).</text>
</comment>
<comment type="catalytic activity">
    <reaction evidence="1">
        <text>UDP-N-acetyl-alpha-D-muramoyl-L-alanine + D-glutamate + ATP = UDP-N-acetyl-alpha-D-muramoyl-L-alanyl-D-glutamate + ADP + phosphate + H(+)</text>
        <dbReference type="Rhea" id="RHEA:16429"/>
        <dbReference type="ChEBI" id="CHEBI:15378"/>
        <dbReference type="ChEBI" id="CHEBI:29986"/>
        <dbReference type="ChEBI" id="CHEBI:30616"/>
        <dbReference type="ChEBI" id="CHEBI:43474"/>
        <dbReference type="ChEBI" id="CHEBI:83898"/>
        <dbReference type="ChEBI" id="CHEBI:83900"/>
        <dbReference type="ChEBI" id="CHEBI:456216"/>
        <dbReference type="EC" id="6.3.2.9"/>
    </reaction>
</comment>
<comment type="pathway">
    <text evidence="1">Cell wall biogenesis; peptidoglycan biosynthesis.</text>
</comment>
<comment type="subcellular location">
    <subcellularLocation>
        <location evidence="1">Cytoplasm</location>
    </subcellularLocation>
</comment>
<comment type="similarity">
    <text evidence="1">Belongs to the MurCDEF family.</text>
</comment>
<gene>
    <name evidence="1" type="primary">murD</name>
    <name type="ordered locus">BAB1_1452</name>
</gene>
<dbReference type="EC" id="6.3.2.9" evidence="1"/>
<dbReference type="EMBL" id="AM040264">
    <property type="protein sequence ID" value="CAJ11408.1"/>
    <property type="molecule type" value="Genomic_DNA"/>
</dbReference>
<dbReference type="RefSeq" id="WP_002964541.1">
    <property type="nucleotide sequence ID" value="NZ_KN046823.1"/>
</dbReference>
<dbReference type="SMR" id="Q2YM69"/>
<dbReference type="STRING" id="359391.BAB1_1452"/>
<dbReference type="GeneID" id="93016269"/>
<dbReference type="KEGG" id="bmf:BAB1_1452"/>
<dbReference type="PATRIC" id="fig|359391.11.peg.903"/>
<dbReference type="HOGENOM" id="CLU_032540_3_0_5"/>
<dbReference type="PhylomeDB" id="Q2YM69"/>
<dbReference type="UniPathway" id="UPA00219"/>
<dbReference type="Proteomes" id="UP000002719">
    <property type="component" value="Chromosome I"/>
</dbReference>
<dbReference type="GO" id="GO:0005737">
    <property type="term" value="C:cytoplasm"/>
    <property type="evidence" value="ECO:0007669"/>
    <property type="project" value="UniProtKB-SubCell"/>
</dbReference>
<dbReference type="GO" id="GO:0005524">
    <property type="term" value="F:ATP binding"/>
    <property type="evidence" value="ECO:0007669"/>
    <property type="project" value="UniProtKB-UniRule"/>
</dbReference>
<dbReference type="GO" id="GO:0004326">
    <property type="term" value="F:tetrahydrofolylpolyglutamate synthase activity"/>
    <property type="evidence" value="ECO:0007669"/>
    <property type="project" value="InterPro"/>
</dbReference>
<dbReference type="GO" id="GO:0008764">
    <property type="term" value="F:UDP-N-acetylmuramoylalanine-D-glutamate ligase activity"/>
    <property type="evidence" value="ECO:0007669"/>
    <property type="project" value="UniProtKB-UniRule"/>
</dbReference>
<dbReference type="GO" id="GO:0051301">
    <property type="term" value="P:cell division"/>
    <property type="evidence" value="ECO:0007669"/>
    <property type="project" value="UniProtKB-KW"/>
</dbReference>
<dbReference type="GO" id="GO:0071555">
    <property type="term" value="P:cell wall organization"/>
    <property type="evidence" value="ECO:0007669"/>
    <property type="project" value="UniProtKB-KW"/>
</dbReference>
<dbReference type="GO" id="GO:0009252">
    <property type="term" value="P:peptidoglycan biosynthetic process"/>
    <property type="evidence" value="ECO:0007669"/>
    <property type="project" value="UniProtKB-UniRule"/>
</dbReference>
<dbReference type="GO" id="GO:0008360">
    <property type="term" value="P:regulation of cell shape"/>
    <property type="evidence" value="ECO:0007669"/>
    <property type="project" value="UniProtKB-KW"/>
</dbReference>
<dbReference type="Gene3D" id="3.90.190.20">
    <property type="entry name" value="Mur ligase, C-terminal domain"/>
    <property type="match status" value="1"/>
</dbReference>
<dbReference type="Gene3D" id="3.40.1190.10">
    <property type="entry name" value="Mur-like, catalytic domain"/>
    <property type="match status" value="1"/>
</dbReference>
<dbReference type="Gene3D" id="3.40.50.720">
    <property type="entry name" value="NAD(P)-binding Rossmann-like Domain"/>
    <property type="match status" value="1"/>
</dbReference>
<dbReference type="HAMAP" id="MF_00639">
    <property type="entry name" value="MurD"/>
    <property type="match status" value="1"/>
</dbReference>
<dbReference type="InterPro" id="IPR018109">
    <property type="entry name" value="Folylpolyglutamate_synth_CS"/>
</dbReference>
<dbReference type="InterPro" id="IPR036565">
    <property type="entry name" value="Mur-like_cat_sf"/>
</dbReference>
<dbReference type="InterPro" id="IPR004101">
    <property type="entry name" value="Mur_ligase_C"/>
</dbReference>
<dbReference type="InterPro" id="IPR036615">
    <property type="entry name" value="Mur_ligase_C_dom_sf"/>
</dbReference>
<dbReference type="InterPro" id="IPR013221">
    <property type="entry name" value="Mur_ligase_cen"/>
</dbReference>
<dbReference type="InterPro" id="IPR005762">
    <property type="entry name" value="MurD"/>
</dbReference>
<dbReference type="InterPro" id="IPR036291">
    <property type="entry name" value="NAD(P)-bd_dom_sf"/>
</dbReference>
<dbReference type="NCBIfam" id="TIGR01087">
    <property type="entry name" value="murD"/>
    <property type="match status" value="1"/>
</dbReference>
<dbReference type="PANTHER" id="PTHR43692">
    <property type="entry name" value="UDP-N-ACETYLMURAMOYLALANINE--D-GLUTAMATE LIGASE"/>
    <property type="match status" value="1"/>
</dbReference>
<dbReference type="PANTHER" id="PTHR43692:SF1">
    <property type="entry name" value="UDP-N-ACETYLMURAMOYLALANINE--D-GLUTAMATE LIGASE"/>
    <property type="match status" value="1"/>
</dbReference>
<dbReference type="Pfam" id="PF02875">
    <property type="entry name" value="Mur_ligase_C"/>
    <property type="match status" value="1"/>
</dbReference>
<dbReference type="Pfam" id="PF08245">
    <property type="entry name" value="Mur_ligase_M"/>
    <property type="match status" value="1"/>
</dbReference>
<dbReference type="SUPFAM" id="SSF53623">
    <property type="entry name" value="MurD-like peptide ligases, catalytic domain"/>
    <property type="match status" value="1"/>
</dbReference>
<dbReference type="SUPFAM" id="SSF53244">
    <property type="entry name" value="MurD-like peptide ligases, peptide-binding domain"/>
    <property type="match status" value="1"/>
</dbReference>
<dbReference type="SUPFAM" id="SSF51735">
    <property type="entry name" value="NAD(P)-binding Rossmann-fold domains"/>
    <property type="match status" value="1"/>
</dbReference>
<organism>
    <name type="scientific">Brucella abortus (strain 2308)</name>
    <dbReference type="NCBI Taxonomy" id="359391"/>
    <lineage>
        <taxon>Bacteria</taxon>
        <taxon>Pseudomonadati</taxon>
        <taxon>Pseudomonadota</taxon>
        <taxon>Alphaproteobacteria</taxon>
        <taxon>Hyphomicrobiales</taxon>
        <taxon>Brucellaceae</taxon>
        <taxon>Brucella/Ochrobactrum group</taxon>
        <taxon>Brucella</taxon>
    </lineage>
</organism>
<protein>
    <recommendedName>
        <fullName evidence="1">UDP-N-acetylmuramoylalanine--D-glutamate ligase</fullName>
        <ecNumber evidence="1">6.3.2.9</ecNumber>
    </recommendedName>
    <alternativeName>
        <fullName evidence="1">D-glutamic acid-adding enzyme</fullName>
    </alternativeName>
    <alternativeName>
        <fullName evidence="1">UDP-N-acetylmuramoyl-L-alanyl-D-glutamate synthetase</fullName>
    </alternativeName>
</protein>
<sequence>MIPITALKDKTVALFGLGGSGIATAKAIVAGGARIIAWDDNPDSVARAQSAGIATGDLRQADWSQFAVFVLSPGVPLTHPQPHWSVDLARAAGVEIIGDVELFVRERNHIAPDCPFIAITGTNGKSTTTALIAHIIKATGRDMQLGGNIGTAILTLEPPCADRFYVVECSSYQIDLAPSLNPTAGILLNLTPDHLDRHGSMENYAAIKERLVAASGTAIIGIDDAYCQAIADRLHGAGIRVVRISKEKHLDRGYFADGAKLLWAQDGEIDEIASLEGIGSLRGAHNAQNALAAIVACLSAGLSLEEIHAGLKSFPGLAHRMEQVGRRGKVLFVNDSKATNAEATAPALSSFPQNIYWIVGGVPKAGGINSLTAFFPRVAKAYLIGEAAAQFAATLGGAVPFEISDTLAAAVAHAAGDAGNDAAPEPVVLLSPACASFDQFQNFEKRGDAFRDAVLALPGVMPMRGGS</sequence>
<proteinExistence type="inferred from homology"/>
<evidence type="ECO:0000255" key="1">
    <source>
        <dbReference type="HAMAP-Rule" id="MF_00639"/>
    </source>
</evidence>
<reference key="1">
    <citation type="journal article" date="2005" name="Infect. Immun.">
        <title>Whole-genome analyses of speciation events in pathogenic Brucellae.</title>
        <authorList>
            <person name="Chain P.S."/>
            <person name="Comerci D.J."/>
            <person name="Tolmasky M.E."/>
            <person name="Larimer F.W."/>
            <person name="Malfatti S.A."/>
            <person name="Vergez L.M."/>
            <person name="Aguero F."/>
            <person name="Land M.L."/>
            <person name="Ugalde R.A."/>
            <person name="Garcia E."/>
        </authorList>
    </citation>
    <scope>NUCLEOTIDE SEQUENCE [LARGE SCALE GENOMIC DNA]</scope>
    <source>
        <strain>2308</strain>
    </source>
</reference>
<keyword id="KW-0067">ATP-binding</keyword>
<keyword id="KW-0131">Cell cycle</keyword>
<keyword id="KW-0132">Cell division</keyword>
<keyword id="KW-0133">Cell shape</keyword>
<keyword id="KW-0961">Cell wall biogenesis/degradation</keyword>
<keyword id="KW-0963">Cytoplasm</keyword>
<keyword id="KW-0436">Ligase</keyword>
<keyword id="KW-0547">Nucleotide-binding</keyword>
<keyword id="KW-0573">Peptidoglycan synthesis</keyword>
<keyword id="KW-1185">Reference proteome</keyword>